<name>RL23_CALS8</name>
<evidence type="ECO:0000255" key="1">
    <source>
        <dbReference type="HAMAP-Rule" id="MF_01369"/>
    </source>
</evidence>
<evidence type="ECO:0000305" key="2"/>
<protein>
    <recommendedName>
        <fullName evidence="1">Large ribosomal subunit protein uL23</fullName>
    </recommendedName>
    <alternativeName>
        <fullName evidence="2">50S ribosomal protein L23</fullName>
    </alternativeName>
</protein>
<reference key="1">
    <citation type="submission" date="2007-04" db="EMBL/GenBank/DDBJ databases">
        <title>Genome sequence of the thermophilic hydrogen-producing bacterium Caldicellulosiruptor saccharolyticus DSM 8903.</title>
        <authorList>
            <person name="Copeland A."/>
            <person name="Lucas S."/>
            <person name="Lapidus A."/>
            <person name="Barry K."/>
            <person name="Detter J.C."/>
            <person name="Glavina del Rio T."/>
            <person name="Hammon N."/>
            <person name="Israni S."/>
            <person name="Dalin E."/>
            <person name="Tice H."/>
            <person name="Pitluck S."/>
            <person name="Kiss H."/>
            <person name="Brettin T."/>
            <person name="Bruce D."/>
            <person name="Han C."/>
            <person name="Schmutz J."/>
            <person name="Larimer F."/>
            <person name="Land M."/>
            <person name="Hauser L."/>
            <person name="Kyrpides N."/>
            <person name="Lykidis A."/>
            <person name="van de Werken H.J.G."/>
            <person name="Verhaart M.R.A."/>
            <person name="VanFossen A.L."/>
            <person name="Lewis D.L."/>
            <person name="Nichols J.D."/>
            <person name="Goorissen H.P."/>
            <person name="van Niel E.W.J."/>
            <person name="Stams F.J.M."/>
            <person name="Willquist K.U."/>
            <person name="Ward D.E."/>
            <person name="van der Oost J."/>
            <person name="Kelly R.M."/>
            <person name="Kengen S.M.W."/>
            <person name="Richardson P."/>
        </authorList>
    </citation>
    <scope>NUCLEOTIDE SEQUENCE [LARGE SCALE GENOMIC DNA]</scope>
    <source>
        <strain>ATCC 43494 / DSM 8903 / Tp8T 6331</strain>
    </source>
</reference>
<comment type="function">
    <text evidence="1">One of the early assembly proteins it binds 23S rRNA. One of the proteins that surrounds the polypeptide exit tunnel on the outside of the ribosome. Forms the main docking site for trigger factor binding to the ribosome.</text>
</comment>
<comment type="subunit">
    <text evidence="1">Part of the 50S ribosomal subunit. Contacts protein L29, and trigger factor when it is bound to the ribosome.</text>
</comment>
<comment type="similarity">
    <text evidence="1">Belongs to the universal ribosomal protein uL23 family.</text>
</comment>
<sequence length="96" mass="11384">MLPEEIIKRPIITEKSMSMIPQKKYTFEVDRRANKIEIKKAVEQLFGVEVEKVWTMNVKPKRKRVGRFEGRTKAWKKAIVKLTDKSKTIEFFDSLI</sequence>
<dbReference type="EMBL" id="CP000679">
    <property type="protein sequence ID" value="ABP67863.1"/>
    <property type="molecule type" value="Genomic_DNA"/>
</dbReference>
<dbReference type="RefSeq" id="WP_011917789.1">
    <property type="nucleotide sequence ID" value="NC_009437.1"/>
</dbReference>
<dbReference type="SMR" id="A4XLS8"/>
<dbReference type="STRING" id="351627.Csac_2285"/>
<dbReference type="KEGG" id="csc:Csac_2285"/>
<dbReference type="eggNOG" id="COG0089">
    <property type="taxonomic scope" value="Bacteria"/>
</dbReference>
<dbReference type="HOGENOM" id="CLU_037562_3_2_9"/>
<dbReference type="OrthoDB" id="9793353at2"/>
<dbReference type="Proteomes" id="UP000000256">
    <property type="component" value="Chromosome"/>
</dbReference>
<dbReference type="GO" id="GO:1990904">
    <property type="term" value="C:ribonucleoprotein complex"/>
    <property type="evidence" value="ECO:0007669"/>
    <property type="project" value="UniProtKB-KW"/>
</dbReference>
<dbReference type="GO" id="GO:0005840">
    <property type="term" value="C:ribosome"/>
    <property type="evidence" value="ECO:0007669"/>
    <property type="project" value="UniProtKB-KW"/>
</dbReference>
<dbReference type="GO" id="GO:0019843">
    <property type="term" value="F:rRNA binding"/>
    <property type="evidence" value="ECO:0007669"/>
    <property type="project" value="UniProtKB-UniRule"/>
</dbReference>
<dbReference type="GO" id="GO:0003735">
    <property type="term" value="F:structural constituent of ribosome"/>
    <property type="evidence" value="ECO:0007669"/>
    <property type="project" value="InterPro"/>
</dbReference>
<dbReference type="GO" id="GO:0006412">
    <property type="term" value="P:translation"/>
    <property type="evidence" value="ECO:0007669"/>
    <property type="project" value="UniProtKB-UniRule"/>
</dbReference>
<dbReference type="FunFam" id="3.30.70.330:FF:000001">
    <property type="entry name" value="50S ribosomal protein L23"/>
    <property type="match status" value="1"/>
</dbReference>
<dbReference type="Gene3D" id="3.30.70.330">
    <property type="match status" value="1"/>
</dbReference>
<dbReference type="HAMAP" id="MF_01369_B">
    <property type="entry name" value="Ribosomal_uL23_B"/>
    <property type="match status" value="1"/>
</dbReference>
<dbReference type="InterPro" id="IPR012677">
    <property type="entry name" value="Nucleotide-bd_a/b_plait_sf"/>
</dbReference>
<dbReference type="InterPro" id="IPR013025">
    <property type="entry name" value="Ribosomal_uL23-like"/>
</dbReference>
<dbReference type="InterPro" id="IPR012678">
    <property type="entry name" value="Ribosomal_uL23/eL15/eS24_sf"/>
</dbReference>
<dbReference type="InterPro" id="IPR001014">
    <property type="entry name" value="Ribosomal_uL23_CS"/>
</dbReference>
<dbReference type="NCBIfam" id="NF004363">
    <property type="entry name" value="PRK05738.2-4"/>
    <property type="match status" value="1"/>
</dbReference>
<dbReference type="PANTHER" id="PTHR11620">
    <property type="entry name" value="60S RIBOSOMAL PROTEIN L23A"/>
    <property type="match status" value="1"/>
</dbReference>
<dbReference type="Pfam" id="PF00276">
    <property type="entry name" value="Ribosomal_L23"/>
    <property type="match status" value="1"/>
</dbReference>
<dbReference type="SUPFAM" id="SSF54189">
    <property type="entry name" value="Ribosomal proteins S24e, L23 and L15e"/>
    <property type="match status" value="1"/>
</dbReference>
<dbReference type="PROSITE" id="PS00050">
    <property type="entry name" value="RIBOSOMAL_L23"/>
    <property type="match status" value="1"/>
</dbReference>
<gene>
    <name evidence="1" type="primary">rplW</name>
    <name type="ordered locus">Csac_2285</name>
</gene>
<organism>
    <name type="scientific">Caldicellulosiruptor saccharolyticus (strain ATCC 43494 / DSM 8903 / Tp8T 6331)</name>
    <dbReference type="NCBI Taxonomy" id="351627"/>
    <lineage>
        <taxon>Bacteria</taxon>
        <taxon>Bacillati</taxon>
        <taxon>Bacillota</taxon>
        <taxon>Bacillota incertae sedis</taxon>
        <taxon>Caldicellulosiruptorales</taxon>
        <taxon>Caldicellulosiruptoraceae</taxon>
        <taxon>Caldicellulosiruptor</taxon>
    </lineage>
</organism>
<keyword id="KW-0687">Ribonucleoprotein</keyword>
<keyword id="KW-0689">Ribosomal protein</keyword>
<keyword id="KW-0694">RNA-binding</keyword>
<keyword id="KW-0699">rRNA-binding</keyword>
<accession>A4XLS8</accession>
<proteinExistence type="inferred from homology"/>
<feature type="chain" id="PRO_1000068052" description="Large ribosomal subunit protein uL23">
    <location>
        <begin position="1"/>
        <end position="96"/>
    </location>
</feature>